<dbReference type="EMBL" id="CP000238">
    <property type="protein sequence ID" value="ABF14309.1"/>
    <property type="molecule type" value="Genomic_DNA"/>
</dbReference>
<dbReference type="RefSeq" id="WP_011520523.1">
    <property type="nucleotide sequence ID" value="NC_007984.1"/>
</dbReference>
<dbReference type="SMR" id="Q1LTC4"/>
<dbReference type="STRING" id="374463.BCI_0342"/>
<dbReference type="KEGG" id="bci:BCI_0342"/>
<dbReference type="HOGENOM" id="CLU_098428_0_0_6"/>
<dbReference type="OrthoDB" id="9802617at2"/>
<dbReference type="Proteomes" id="UP000002427">
    <property type="component" value="Chromosome"/>
</dbReference>
<dbReference type="GO" id="GO:1990904">
    <property type="term" value="C:ribonucleoprotein complex"/>
    <property type="evidence" value="ECO:0007669"/>
    <property type="project" value="UniProtKB-KW"/>
</dbReference>
<dbReference type="GO" id="GO:0005840">
    <property type="term" value="C:ribosome"/>
    <property type="evidence" value="ECO:0007669"/>
    <property type="project" value="UniProtKB-KW"/>
</dbReference>
<dbReference type="GO" id="GO:0019843">
    <property type="term" value="F:rRNA binding"/>
    <property type="evidence" value="ECO:0007669"/>
    <property type="project" value="UniProtKB-UniRule"/>
</dbReference>
<dbReference type="GO" id="GO:0003735">
    <property type="term" value="F:structural constituent of ribosome"/>
    <property type="evidence" value="ECO:0007669"/>
    <property type="project" value="InterPro"/>
</dbReference>
<dbReference type="GO" id="GO:0006412">
    <property type="term" value="P:translation"/>
    <property type="evidence" value="ECO:0007669"/>
    <property type="project" value="UniProtKB-UniRule"/>
</dbReference>
<dbReference type="FunFam" id="3.30.1370.30:FF:000003">
    <property type="entry name" value="30S ribosomal protein S8"/>
    <property type="match status" value="1"/>
</dbReference>
<dbReference type="FunFam" id="3.30.1490.10:FF:000001">
    <property type="entry name" value="30S ribosomal protein S8"/>
    <property type="match status" value="1"/>
</dbReference>
<dbReference type="Gene3D" id="3.30.1370.30">
    <property type="match status" value="1"/>
</dbReference>
<dbReference type="Gene3D" id="3.30.1490.10">
    <property type="match status" value="1"/>
</dbReference>
<dbReference type="HAMAP" id="MF_01302_B">
    <property type="entry name" value="Ribosomal_uS8_B"/>
    <property type="match status" value="1"/>
</dbReference>
<dbReference type="InterPro" id="IPR000630">
    <property type="entry name" value="Ribosomal_uS8"/>
</dbReference>
<dbReference type="InterPro" id="IPR047863">
    <property type="entry name" value="Ribosomal_uS8_CS"/>
</dbReference>
<dbReference type="InterPro" id="IPR035987">
    <property type="entry name" value="Ribosomal_uS8_sf"/>
</dbReference>
<dbReference type="NCBIfam" id="NF001109">
    <property type="entry name" value="PRK00136.1"/>
    <property type="match status" value="1"/>
</dbReference>
<dbReference type="PANTHER" id="PTHR11758">
    <property type="entry name" value="40S RIBOSOMAL PROTEIN S15A"/>
    <property type="match status" value="1"/>
</dbReference>
<dbReference type="Pfam" id="PF00410">
    <property type="entry name" value="Ribosomal_S8"/>
    <property type="match status" value="1"/>
</dbReference>
<dbReference type="SUPFAM" id="SSF56047">
    <property type="entry name" value="Ribosomal protein S8"/>
    <property type="match status" value="1"/>
</dbReference>
<dbReference type="PROSITE" id="PS00053">
    <property type="entry name" value="RIBOSOMAL_S8"/>
    <property type="match status" value="1"/>
</dbReference>
<feature type="chain" id="PRO_0000290805" description="Small ribosomal subunit protein uS8">
    <location>
        <begin position="1"/>
        <end position="132"/>
    </location>
</feature>
<comment type="function">
    <text evidence="1">One of the primary rRNA binding proteins, it binds directly to 16S rRNA central domain where it helps coordinate assembly of the platform of the 30S subunit.</text>
</comment>
<comment type="subunit">
    <text evidence="1">Part of the 30S ribosomal subunit. Contacts proteins S5 and S12.</text>
</comment>
<comment type="similarity">
    <text evidence="1">Belongs to the universal ribosomal protein uS8 family.</text>
</comment>
<name>RS8_BAUCH</name>
<evidence type="ECO:0000255" key="1">
    <source>
        <dbReference type="HAMAP-Rule" id="MF_01302"/>
    </source>
</evidence>
<evidence type="ECO:0000305" key="2"/>
<gene>
    <name evidence="1" type="primary">rpsH</name>
    <name type="ordered locus">BCI_0342</name>
</gene>
<sequence length="132" mass="14762">MSMQDPIADMLTRIRNGQTAHKTILFMPSSKLKVAIARLLQEEGFIKDYKVEGNIKKKPVLKIFLKYFQGKPVIENIQRISRPSLRIYRKKTALPNIMGGMGIAIISTSKGIMTDYTARQAGLGGEIICHVA</sequence>
<organism>
    <name type="scientific">Baumannia cicadellinicola subsp. Homalodisca coagulata</name>
    <dbReference type="NCBI Taxonomy" id="374463"/>
    <lineage>
        <taxon>Bacteria</taxon>
        <taxon>Pseudomonadati</taxon>
        <taxon>Pseudomonadota</taxon>
        <taxon>Gammaproteobacteria</taxon>
        <taxon>Candidatus Palibaumannia</taxon>
    </lineage>
</organism>
<reference key="1">
    <citation type="journal article" date="2006" name="PLoS Biol.">
        <title>Metabolic complementarity and genomics of the dual bacterial symbiosis of sharpshooters.</title>
        <authorList>
            <person name="Wu D."/>
            <person name="Daugherty S.C."/>
            <person name="Van Aken S.E."/>
            <person name="Pai G.H."/>
            <person name="Watkins K.L."/>
            <person name="Khouri H."/>
            <person name="Tallon L.J."/>
            <person name="Zaborsky J.M."/>
            <person name="Dunbar H.E."/>
            <person name="Tran P.L."/>
            <person name="Moran N.A."/>
            <person name="Eisen J.A."/>
        </authorList>
    </citation>
    <scope>NUCLEOTIDE SEQUENCE [LARGE SCALE GENOMIC DNA]</scope>
</reference>
<accession>Q1LTC4</accession>
<proteinExistence type="inferred from homology"/>
<protein>
    <recommendedName>
        <fullName evidence="1">Small ribosomal subunit protein uS8</fullName>
    </recommendedName>
    <alternativeName>
        <fullName evidence="2">30S ribosomal protein S8</fullName>
    </alternativeName>
</protein>
<keyword id="KW-1185">Reference proteome</keyword>
<keyword id="KW-0687">Ribonucleoprotein</keyword>
<keyword id="KW-0689">Ribosomal protein</keyword>
<keyword id="KW-0694">RNA-binding</keyword>
<keyword id="KW-0699">rRNA-binding</keyword>